<accession>Q8VIH7</accession>
<accession>Q499D9</accession>
<sequence length="165" mass="18044">MDALRLPRRPGVLLPKLILLFVYAGDCLAQCGKECHSYCCDGSTPYCCSYYAYIGNILSGTAIAGIVFGIVFIMGVIAGIAICICMCMKNNRGTRVGVIRAAHINAISYPMAPPPYTYDHEMEYRTDLPPPYSAAPQASAQRSPPPPYPGNPRKYSSSQNRIRDN</sequence>
<name>CYYR1_MOUSE</name>
<reference key="1">
    <citation type="journal article" date="2002" name="Gene">
        <title>Cysteine and tyrosine-rich 1 (CYYR1), a novel unpredicted gene on human chromosome 21 (21q21.2), encodes a cysteine and tyrosine-rich protein and defines a new family of highly conserved vertebrate-specific genes.</title>
        <authorList>
            <person name="Vitale L."/>
            <person name="Casadei R."/>
            <person name="Canaider S."/>
            <person name="Lenzi L."/>
            <person name="Strippoli P."/>
            <person name="D'Addabbo P."/>
            <person name="Giannone S."/>
            <person name="Carinci P."/>
            <person name="Zannotti M."/>
        </authorList>
    </citation>
    <scope>NUCLEOTIDE SEQUENCE [MRNA]</scope>
    <source>
        <strain>BALB/cJ</strain>
        <tissue>Brain</tissue>
    </source>
</reference>
<reference key="2">
    <citation type="journal article" date="2002" name="Genomics">
        <title>Nineteen additional unpredicted transcripts from human chromosome 21.</title>
        <authorList>
            <person name="Reymond A."/>
            <person name="Camargo A.A."/>
            <person name="Deutsch S."/>
            <person name="Stevenson B.J."/>
            <person name="Parmigiani R.B."/>
            <person name="Ucla C."/>
            <person name="Bettoni F."/>
            <person name="Rossier C."/>
            <person name="Lyle R."/>
            <person name="Guipponi M."/>
            <person name="de Souza S."/>
            <person name="Iseli C."/>
            <person name="Jongeneel C.V."/>
            <person name="Bucher P."/>
            <person name="Simpson A.J.G."/>
            <person name="Antonarakis S.E."/>
        </authorList>
    </citation>
    <scope>NUCLEOTIDE SEQUENCE [MRNA]</scope>
</reference>
<reference key="3">
    <citation type="journal article" date="2009" name="PLoS Biol.">
        <title>Lineage-specific biology revealed by a finished genome assembly of the mouse.</title>
        <authorList>
            <person name="Church D.M."/>
            <person name="Goodstadt L."/>
            <person name="Hillier L.W."/>
            <person name="Zody M.C."/>
            <person name="Goldstein S."/>
            <person name="She X."/>
            <person name="Bult C.J."/>
            <person name="Agarwala R."/>
            <person name="Cherry J.L."/>
            <person name="DiCuccio M."/>
            <person name="Hlavina W."/>
            <person name="Kapustin Y."/>
            <person name="Meric P."/>
            <person name="Maglott D."/>
            <person name="Birtle Z."/>
            <person name="Marques A.C."/>
            <person name="Graves T."/>
            <person name="Zhou S."/>
            <person name="Teague B."/>
            <person name="Potamousis K."/>
            <person name="Churas C."/>
            <person name="Place M."/>
            <person name="Herschleb J."/>
            <person name="Runnheim R."/>
            <person name="Forrest D."/>
            <person name="Amos-Landgraf J."/>
            <person name="Schwartz D.C."/>
            <person name="Cheng Z."/>
            <person name="Lindblad-Toh K."/>
            <person name="Eichler E.E."/>
            <person name="Ponting C.P."/>
        </authorList>
    </citation>
    <scope>NUCLEOTIDE SEQUENCE [LARGE SCALE GENOMIC DNA]</scope>
    <source>
        <strain>C57BL/6J</strain>
    </source>
</reference>
<reference key="4">
    <citation type="journal article" date="2004" name="Genome Res.">
        <title>The status, quality, and expansion of the NIH full-length cDNA project: the Mammalian Gene Collection (MGC).</title>
        <authorList>
            <consortium name="The MGC Project Team"/>
        </authorList>
    </citation>
    <scope>NUCLEOTIDE SEQUENCE [LARGE SCALE MRNA]</scope>
    <source>
        <tissue>Brain</tissue>
        <tissue>Pancreas</tissue>
    </source>
</reference>
<reference key="5">
    <citation type="journal article" date="2010" name="Cell">
        <title>A tissue-specific atlas of mouse protein phosphorylation and expression.</title>
        <authorList>
            <person name="Huttlin E.L."/>
            <person name="Jedrychowski M.P."/>
            <person name="Elias J.E."/>
            <person name="Goswami T."/>
            <person name="Rad R."/>
            <person name="Beausoleil S.A."/>
            <person name="Villen J."/>
            <person name="Haas W."/>
            <person name="Sowa M.E."/>
            <person name="Gygi S.P."/>
        </authorList>
    </citation>
    <scope>IDENTIFICATION BY MASS SPECTROMETRY [LARGE SCALE ANALYSIS]</scope>
    <source>
        <tissue>Lung</tissue>
    </source>
</reference>
<comment type="subcellular location">
    <subcellularLocation>
        <location evidence="3">Membrane</location>
        <topology evidence="3">Single-pass type I membrane protein</topology>
    </subcellularLocation>
</comment>
<comment type="similarity">
    <text evidence="3">Belongs to the CYYR1 family.</text>
</comment>
<proteinExistence type="evidence at protein level"/>
<organism>
    <name type="scientific">Mus musculus</name>
    <name type="common">Mouse</name>
    <dbReference type="NCBI Taxonomy" id="10090"/>
    <lineage>
        <taxon>Eukaryota</taxon>
        <taxon>Metazoa</taxon>
        <taxon>Chordata</taxon>
        <taxon>Craniata</taxon>
        <taxon>Vertebrata</taxon>
        <taxon>Euteleostomi</taxon>
        <taxon>Mammalia</taxon>
        <taxon>Eutheria</taxon>
        <taxon>Euarchontoglires</taxon>
        <taxon>Glires</taxon>
        <taxon>Rodentia</taxon>
        <taxon>Myomorpha</taxon>
        <taxon>Muroidea</taxon>
        <taxon>Muridae</taxon>
        <taxon>Murinae</taxon>
        <taxon>Mus</taxon>
        <taxon>Mus</taxon>
    </lineage>
</organism>
<gene>
    <name type="primary">Cyyr1</name>
</gene>
<protein>
    <recommendedName>
        <fullName>Cysteine and tyrosine-rich protein 1</fullName>
    </recommendedName>
    <alternativeName>
        <fullName>Proline-rich domain-containing protein</fullName>
    </alternativeName>
</protein>
<keyword id="KW-0472">Membrane</keyword>
<keyword id="KW-1185">Reference proteome</keyword>
<keyword id="KW-0732">Signal</keyword>
<keyword id="KW-0812">Transmembrane</keyword>
<keyword id="KW-1133">Transmembrane helix</keyword>
<feature type="signal peptide" evidence="1">
    <location>
        <begin position="1"/>
        <end position="29"/>
    </location>
</feature>
<feature type="chain" id="PRO_0000021055" description="Cysteine and tyrosine-rich protein 1">
    <location>
        <begin position="30"/>
        <end position="165"/>
    </location>
</feature>
<feature type="topological domain" description="Extracellular" evidence="1">
    <location>
        <begin position="30"/>
        <end position="61"/>
    </location>
</feature>
<feature type="transmembrane region" description="Helical" evidence="1">
    <location>
        <begin position="62"/>
        <end position="82"/>
    </location>
</feature>
<feature type="topological domain" description="Cytoplasmic" evidence="1">
    <location>
        <begin position="83"/>
        <end position="165"/>
    </location>
</feature>
<feature type="region of interest" description="Disordered" evidence="2">
    <location>
        <begin position="125"/>
        <end position="165"/>
    </location>
</feature>
<feature type="compositionally biased region" description="Polar residues" evidence="2">
    <location>
        <begin position="154"/>
        <end position="165"/>
    </location>
</feature>
<feature type="sequence conflict" description="In Ref. 1; AAL35295." evidence="3" ref="1">
    <original>H</original>
    <variation>R</variation>
    <location>
        <position position="36"/>
    </location>
</feature>
<dbReference type="EMBL" id="AF442733">
    <property type="protein sequence ID" value="AAL35295.1"/>
    <property type="molecule type" value="mRNA"/>
</dbReference>
<dbReference type="EMBL" id="AY061854">
    <property type="protein sequence ID" value="AAL35738.1"/>
    <property type="molecule type" value="mRNA"/>
</dbReference>
<dbReference type="EMBL" id="AC154622">
    <property type="status" value="NOT_ANNOTATED_CDS"/>
    <property type="molecule type" value="Genomic_DNA"/>
</dbReference>
<dbReference type="EMBL" id="CT025589">
    <property type="status" value="NOT_ANNOTATED_CDS"/>
    <property type="molecule type" value="Genomic_DNA"/>
</dbReference>
<dbReference type="EMBL" id="BC099957">
    <property type="protein sequence ID" value="AAH99957.1"/>
    <property type="molecule type" value="mRNA"/>
</dbReference>
<dbReference type="EMBL" id="BC125594">
    <property type="protein sequence ID" value="AAI25595.1"/>
    <property type="molecule type" value="mRNA"/>
</dbReference>
<dbReference type="EMBL" id="BC125596">
    <property type="protein sequence ID" value="AAI25597.1"/>
    <property type="molecule type" value="mRNA"/>
</dbReference>
<dbReference type="CCDS" id="CCDS28286.1"/>
<dbReference type="RefSeq" id="NP_659102.1">
    <property type="nucleotide sequence ID" value="NM_144853.4"/>
</dbReference>
<dbReference type="RefSeq" id="XP_006523068.1">
    <property type="nucleotide sequence ID" value="XM_006523005.1"/>
</dbReference>
<dbReference type="FunCoup" id="Q8VIH7">
    <property type="interactions" value="1"/>
</dbReference>
<dbReference type="STRING" id="10090.ENSMUSP00000109811"/>
<dbReference type="iPTMnet" id="Q8VIH7"/>
<dbReference type="PhosphoSitePlus" id="Q8VIH7"/>
<dbReference type="PaxDb" id="10090-ENSMUSP00000109811"/>
<dbReference type="ProteomicsDB" id="279144"/>
<dbReference type="Antibodypedia" id="60029">
    <property type="antibodies" value="73 antibodies from 16 providers"/>
</dbReference>
<dbReference type="DNASU" id="224405"/>
<dbReference type="Ensembl" id="ENSMUST00000114174.3">
    <property type="protein sequence ID" value="ENSMUSP00000109811.3"/>
    <property type="gene ID" value="ENSMUSG00000041134.16"/>
</dbReference>
<dbReference type="GeneID" id="224405"/>
<dbReference type="KEGG" id="mmu:224405"/>
<dbReference type="UCSC" id="uc007ztu.2">
    <property type="organism name" value="mouse"/>
</dbReference>
<dbReference type="AGR" id="MGI:2152187"/>
<dbReference type="CTD" id="116159"/>
<dbReference type="MGI" id="MGI:2152187">
    <property type="gene designation" value="Cyyr1"/>
</dbReference>
<dbReference type="VEuPathDB" id="HostDB:ENSMUSG00000041134"/>
<dbReference type="eggNOG" id="ENOG502S121">
    <property type="taxonomic scope" value="Eukaryota"/>
</dbReference>
<dbReference type="GeneTree" id="ENSGT00500000044986"/>
<dbReference type="HOGENOM" id="CLU_143594_0_0_1"/>
<dbReference type="InParanoid" id="Q8VIH7"/>
<dbReference type="OMA" id="YSYDYEM"/>
<dbReference type="OrthoDB" id="8920103at2759"/>
<dbReference type="PhylomeDB" id="Q8VIH7"/>
<dbReference type="TreeFam" id="TF332064"/>
<dbReference type="BioGRID-ORCS" id="224405">
    <property type="hits" value="1 hit in 78 CRISPR screens"/>
</dbReference>
<dbReference type="ChiTaRS" id="Cyyr1">
    <property type="organism name" value="mouse"/>
</dbReference>
<dbReference type="PRO" id="PR:Q8VIH7"/>
<dbReference type="Proteomes" id="UP000000589">
    <property type="component" value="Chromosome 16"/>
</dbReference>
<dbReference type="RNAct" id="Q8VIH7">
    <property type="molecule type" value="protein"/>
</dbReference>
<dbReference type="Bgee" id="ENSMUSG00000041134">
    <property type="expression patterns" value="Expressed in brain blood vessel and 173 other cell types or tissues"/>
</dbReference>
<dbReference type="ExpressionAtlas" id="Q8VIH7">
    <property type="expression patterns" value="baseline and differential"/>
</dbReference>
<dbReference type="GO" id="GO:0016020">
    <property type="term" value="C:membrane"/>
    <property type="evidence" value="ECO:0007669"/>
    <property type="project" value="UniProtKB-SubCell"/>
</dbReference>
<dbReference type="InterPro" id="IPR022640">
    <property type="entry name" value="CYYR1"/>
</dbReference>
<dbReference type="PANTHER" id="PTHR38490">
    <property type="entry name" value="CYSTEINE AND TYROSINE-RICH PROTEIN 1"/>
    <property type="match status" value="1"/>
</dbReference>
<dbReference type="PANTHER" id="PTHR38490:SF1">
    <property type="entry name" value="CYSTEINE AND TYROSINE-RICH PROTEIN 1"/>
    <property type="match status" value="1"/>
</dbReference>
<dbReference type="Pfam" id="PF10873">
    <property type="entry name" value="CYYR1"/>
    <property type="match status" value="1"/>
</dbReference>
<evidence type="ECO:0000255" key="1"/>
<evidence type="ECO:0000256" key="2">
    <source>
        <dbReference type="SAM" id="MobiDB-lite"/>
    </source>
</evidence>
<evidence type="ECO:0000305" key="3"/>